<keyword id="KW-0963">Cytoplasm</keyword>
<keyword id="KW-0269">Exonuclease</keyword>
<keyword id="KW-0378">Hydrolase</keyword>
<keyword id="KW-0540">Nuclease</keyword>
<proteinExistence type="inferred from homology"/>
<accession>A4W384</accession>
<feature type="chain" id="PRO_0000303764" description="Exodeoxyribonuclease 7 small subunit">
    <location>
        <begin position="1"/>
        <end position="71"/>
    </location>
</feature>
<gene>
    <name evidence="1" type="primary">xseB</name>
    <name type="ordered locus">SSU98_1665</name>
</gene>
<comment type="function">
    <text evidence="1">Bidirectionally degrades single-stranded DNA into large acid-insoluble oligonucleotides, which are then degraded further into small acid-soluble oligonucleotides.</text>
</comment>
<comment type="catalytic activity">
    <reaction evidence="1">
        <text>Exonucleolytic cleavage in either 5'- to 3'- or 3'- to 5'-direction to yield nucleoside 5'-phosphates.</text>
        <dbReference type="EC" id="3.1.11.6"/>
    </reaction>
</comment>
<comment type="subunit">
    <text evidence="1">Heterooligomer composed of large and small subunits.</text>
</comment>
<comment type="subcellular location">
    <subcellularLocation>
        <location evidence="1">Cytoplasm</location>
    </subcellularLocation>
</comment>
<comment type="similarity">
    <text evidence="1">Belongs to the XseB family.</text>
</comment>
<reference key="1">
    <citation type="journal article" date="2007" name="PLoS ONE">
        <title>A glimpse of streptococcal toxic shock syndrome from comparative genomics of S. suis 2 Chinese isolates.</title>
        <authorList>
            <person name="Chen C."/>
            <person name="Tang J."/>
            <person name="Dong W."/>
            <person name="Wang C."/>
            <person name="Feng Y."/>
            <person name="Wang J."/>
            <person name="Zheng F."/>
            <person name="Pan X."/>
            <person name="Liu D."/>
            <person name="Li M."/>
            <person name="Song Y."/>
            <person name="Zhu X."/>
            <person name="Sun H."/>
            <person name="Feng T."/>
            <person name="Guo Z."/>
            <person name="Ju A."/>
            <person name="Ge J."/>
            <person name="Dong Y."/>
            <person name="Sun W."/>
            <person name="Jiang Y."/>
            <person name="Wang J."/>
            <person name="Yan J."/>
            <person name="Yang H."/>
            <person name="Wang X."/>
            <person name="Gao G.F."/>
            <person name="Yang R."/>
            <person name="Wang J."/>
            <person name="Yu J."/>
        </authorList>
    </citation>
    <scope>NUCLEOTIDE SEQUENCE [LARGE SCALE GENOMIC DNA]</scope>
    <source>
        <strain>98HAH33</strain>
    </source>
</reference>
<dbReference type="EC" id="3.1.11.6" evidence="1"/>
<dbReference type="EMBL" id="CP000408">
    <property type="protein sequence ID" value="ABP92823.1"/>
    <property type="molecule type" value="Genomic_DNA"/>
</dbReference>
<dbReference type="SMR" id="A4W384"/>
<dbReference type="KEGG" id="ssv:SSU98_1665"/>
<dbReference type="HOGENOM" id="CLU_145918_3_2_9"/>
<dbReference type="GO" id="GO:0005829">
    <property type="term" value="C:cytosol"/>
    <property type="evidence" value="ECO:0007669"/>
    <property type="project" value="TreeGrafter"/>
</dbReference>
<dbReference type="GO" id="GO:0009318">
    <property type="term" value="C:exodeoxyribonuclease VII complex"/>
    <property type="evidence" value="ECO:0007669"/>
    <property type="project" value="InterPro"/>
</dbReference>
<dbReference type="GO" id="GO:0008855">
    <property type="term" value="F:exodeoxyribonuclease VII activity"/>
    <property type="evidence" value="ECO:0007669"/>
    <property type="project" value="UniProtKB-UniRule"/>
</dbReference>
<dbReference type="GO" id="GO:0006308">
    <property type="term" value="P:DNA catabolic process"/>
    <property type="evidence" value="ECO:0007669"/>
    <property type="project" value="UniProtKB-UniRule"/>
</dbReference>
<dbReference type="Gene3D" id="1.10.287.1040">
    <property type="entry name" value="Exonuclease VII, small subunit"/>
    <property type="match status" value="1"/>
</dbReference>
<dbReference type="HAMAP" id="MF_00337">
    <property type="entry name" value="Exonuc_7_S"/>
    <property type="match status" value="1"/>
</dbReference>
<dbReference type="InterPro" id="IPR003761">
    <property type="entry name" value="Exonuc_VII_S"/>
</dbReference>
<dbReference type="InterPro" id="IPR037004">
    <property type="entry name" value="Exonuc_VII_ssu_sf"/>
</dbReference>
<dbReference type="NCBIfam" id="NF002138">
    <property type="entry name" value="PRK00977.1-2"/>
    <property type="match status" value="1"/>
</dbReference>
<dbReference type="NCBIfam" id="TIGR01280">
    <property type="entry name" value="xseB"/>
    <property type="match status" value="1"/>
</dbReference>
<dbReference type="PANTHER" id="PTHR34137">
    <property type="entry name" value="EXODEOXYRIBONUCLEASE 7 SMALL SUBUNIT"/>
    <property type="match status" value="1"/>
</dbReference>
<dbReference type="PANTHER" id="PTHR34137:SF1">
    <property type="entry name" value="EXODEOXYRIBONUCLEASE 7 SMALL SUBUNIT"/>
    <property type="match status" value="1"/>
</dbReference>
<dbReference type="Pfam" id="PF02609">
    <property type="entry name" value="Exonuc_VII_S"/>
    <property type="match status" value="1"/>
</dbReference>
<dbReference type="PIRSF" id="PIRSF006488">
    <property type="entry name" value="Exonuc_VII_S"/>
    <property type="match status" value="1"/>
</dbReference>
<dbReference type="SUPFAM" id="SSF116842">
    <property type="entry name" value="XseB-like"/>
    <property type="match status" value="1"/>
</dbReference>
<organism>
    <name type="scientific">Streptococcus suis (strain 98HAH33)</name>
    <dbReference type="NCBI Taxonomy" id="391296"/>
    <lineage>
        <taxon>Bacteria</taxon>
        <taxon>Bacillati</taxon>
        <taxon>Bacillota</taxon>
        <taxon>Bacilli</taxon>
        <taxon>Lactobacillales</taxon>
        <taxon>Streptococcaceae</taxon>
        <taxon>Streptococcus</taxon>
    </lineage>
</organism>
<name>EX7S_STRS2</name>
<evidence type="ECO:0000255" key="1">
    <source>
        <dbReference type="HAMAP-Rule" id="MF_00337"/>
    </source>
</evidence>
<protein>
    <recommendedName>
        <fullName evidence="1">Exodeoxyribonuclease 7 small subunit</fullName>
        <ecNumber evidence="1">3.1.11.6</ecNumber>
    </recommendedName>
    <alternativeName>
        <fullName evidence="1">Exodeoxyribonuclease VII small subunit</fullName>
        <shortName evidence="1">Exonuclease VII small subunit</shortName>
    </alternativeName>
</protein>
<sequence>MSKQTKTFEENLAELEGIVTKLERGDVALEEALAEFQKGMVLSKDLQKTLAEAEKTLVKVMQADGSEAEMD</sequence>